<dbReference type="EC" id="2.4.1.-"/>
<dbReference type="EMBL" id="AL391141">
    <property type="protein sequence ID" value="CAC01716.1"/>
    <property type="molecule type" value="Genomic_DNA"/>
</dbReference>
<dbReference type="EMBL" id="CP002688">
    <property type="protein sequence ID" value="AED92375.1"/>
    <property type="molecule type" value="Genomic_DNA"/>
</dbReference>
<dbReference type="EMBL" id="AY088168">
    <property type="protein sequence ID" value="AAM65712.1"/>
    <property type="molecule type" value="mRNA"/>
</dbReference>
<dbReference type="PIR" id="T51558">
    <property type="entry name" value="T51558"/>
</dbReference>
<dbReference type="RefSeq" id="NP_197205.1">
    <property type="nucleotide sequence ID" value="NM_121709.2"/>
</dbReference>
<dbReference type="SMR" id="Q9LFK0"/>
<dbReference type="STRING" id="3702.Q9LFK0"/>
<dbReference type="CAZy" id="GT1">
    <property type="family name" value="Glycosyltransferase Family 1"/>
</dbReference>
<dbReference type="iPTMnet" id="Q9LFK0"/>
<dbReference type="PaxDb" id="3702-AT5G17030.1"/>
<dbReference type="ProteomicsDB" id="243210"/>
<dbReference type="EnsemblPlants" id="AT5G17030.1">
    <property type="protein sequence ID" value="AT5G17030.1"/>
    <property type="gene ID" value="AT5G17030"/>
</dbReference>
<dbReference type="GeneID" id="831566"/>
<dbReference type="Gramene" id="AT5G17030.1">
    <property type="protein sequence ID" value="AT5G17030.1"/>
    <property type="gene ID" value="AT5G17030"/>
</dbReference>
<dbReference type="KEGG" id="ath:AT5G17030"/>
<dbReference type="Araport" id="AT5G17030"/>
<dbReference type="TAIR" id="AT5G17030">
    <property type="gene designation" value="UGT78D3"/>
</dbReference>
<dbReference type="eggNOG" id="KOG1192">
    <property type="taxonomic scope" value="Eukaryota"/>
</dbReference>
<dbReference type="HOGENOM" id="CLU_001724_0_2_1"/>
<dbReference type="InParanoid" id="Q9LFK0"/>
<dbReference type="OMA" id="CTLSLYF"/>
<dbReference type="PhylomeDB" id="Q9LFK0"/>
<dbReference type="PRO" id="PR:Q9LFK0"/>
<dbReference type="Proteomes" id="UP000006548">
    <property type="component" value="Chromosome 5"/>
</dbReference>
<dbReference type="ExpressionAtlas" id="Q9LFK0">
    <property type="expression patterns" value="baseline and differential"/>
</dbReference>
<dbReference type="GO" id="GO:0080059">
    <property type="term" value="F:flavonol 3-O-arabinosyltransferase activity"/>
    <property type="evidence" value="ECO:0000315"/>
    <property type="project" value="TAIR"/>
</dbReference>
<dbReference type="GO" id="GO:0080043">
    <property type="term" value="F:quercetin 3-O-glucosyltransferase activity"/>
    <property type="evidence" value="ECO:0000314"/>
    <property type="project" value="TAIR"/>
</dbReference>
<dbReference type="CDD" id="cd03784">
    <property type="entry name" value="GT1_Gtf-like"/>
    <property type="match status" value="1"/>
</dbReference>
<dbReference type="FunFam" id="3.40.50.2000:FF:000091">
    <property type="entry name" value="Glycosyltransferase"/>
    <property type="match status" value="1"/>
</dbReference>
<dbReference type="FunFam" id="3.40.50.2000:FF:000129">
    <property type="entry name" value="Glycosyltransferase"/>
    <property type="match status" value="1"/>
</dbReference>
<dbReference type="Gene3D" id="3.40.50.2000">
    <property type="entry name" value="Glycogen Phosphorylase B"/>
    <property type="match status" value="2"/>
</dbReference>
<dbReference type="InterPro" id="IPR002213">
    <property type="entry name" value="UDP_glucos_trans"/>
</dbReference>
<dbReference type="InterPro" id="IPR035595">
    <property type="entry name" value="UDP_glycos_trans_CS"/>
</dbReference>
<dbReference type="PANTHER" id="PTHR11926:SF1494">
    <property type="entry name" value="FLAVONOL 3-O-GLUCOSYLTRANSFERASE UGT76E12-RELATED"/>
    <property type="match status" value="1"/>
</dbReference>
<dbReference type="PANTHER" id="PTHR11926">
    <property type="entry name" value="GLUCOSYL/GLUCURONOSYL TRANSFERASES"/>
    <property type="match status" value="1"/>
</dbReference>
<dbReference type="Pfam" id="PF00201">
    <property type="entry name" value="UDPGT"/>
    <property type="match status" value="1"/>
</dbReference>
<dbReference type="SUPFAM" id="SSF53756">
    <property type="entry name" value="UDP-Glycosyltransferase/glycogen phosphorylase"/>
    <property type="match status" value="1"/>
</dbReference>
<dbReference type="PROSITE" id="PS00375">
    <property type="entry name" value="UDPGT"/>
    <property type="match status" value="1"/>
</dbReference>
<proteinExistence type="evidence at transcript level"/>
<name>U78D3_ARATH</name>
<protein>
    <recommendedName>
        <fullName>UDP-glycosyltransferase 78D3</fullName>
        <ecNumber>2.4.1.-</ecNumber>
    </recommendedName>
</protein>
<reference key="1">
    <citation type="journal article" date="2000" name="Nature">
        <title>Sequence and analysis of chromosome 5 of the plant Arabidopsis thaliana.</title>
        <authorList>
            <person name="Tabata S."/>
            <person name="Kaneko T."/>
            <person name="Nakamura Y."/>
            <person name="Kotani H."/>
            <person name="Kato T."/>
            <person name="Asamizu E."/>
            <person name="Miyajima N."/>
            <person name="Sasamoto S."/>
            <person name="Kimura T."/>
            <person name="Hosouchi T."/>
            <person name="Kawashima K."/>
            <person name="Kohara M."/>
            <person name="Matsumoto M."/>
            <person name="Matsuno A."/>
            <person name="Muraki A."/>
            <person name="Nakayama S."/>
            <person name="Nakazaki N."/>
            <person name="Naruo K."/>
            <person name="Okumura S."/>
            <person name="Shinpo S."/>
            <person name="Takeuchi C."/>
            <person name="Wada T."/>
            <person name="Watanabe A."/>
            <person name="Yamada M."/>
            <person name="Yasuda M."/>
            <person name="Sato S."/>
            <person name="de la Bastide M."/>
            <person name="Huang E."/>
            <person name="Spiegel L."/>
            <person name="Gnoj L."/>
            <person name="O'Shaughnessy A."/>
            <person name="Preston R."/>
            <person name="Habermann K."/>
            <person name="Murray J."/>
            <person name="Johnson D."/>
            <person name="Rohlfing T."/>
            <person name="Nelson J."/>
            <person name="Stoneking T."/>
            <person name="Pepin K."/>
            <person name="Spieth J."/>
            <person name="Sekhon M."/>
            <person name="Armstrong J."/>
            <person name="Becker M."/>
            <person name="Belter E."/>
            <person name="Cordum H."/>
            <person name="Cordes M."/>
            <person name="Courtney L."/>
            <person name="Courtney W."/>
            <person name="Dante M."/>
            <person name="Du H."/>
            <person name="Edwards J."/>
            <person name="Fryman J."/>
            <person name="Haakensen B."/>
            <person name="Lamar E."/>
            <person name="Latreille P."/>
            <person name="Leonard S."/>
            <person name="Meyer R."/>
            <person name="Mulvaney E."/>
            <person name="Ozersky P."/>
            <person name="Riley A."/>
            <person name="Strowmatt C."/>
            <person name="Wagner-McPherson C."/>
            <person name="Wollam A."/>
            <person name="Yoakum M."/>
            <person name="Bell M."/>
            <person name="Dedhia N."/>
            <person name="Parnell L."/>
            <person name="Shah R."/>
            <person name="Rodriguez M."/>
            <person name="Hoon See L."/>
            <person name="Vil D."/>
            <person name="Baker J."/>
            <person name="Kirchoff K."/>
            <person name="Toth K."/>
            <person name="King L."/>
            <person name="Bahret A."/>
            <person name="Miller B."/>
            <person name="Marra M.A."/>
            <person name="Martienssen R."/>
            <person name="McCombie W.R."/>
            <person name="Wilson R.K."/>
            <person name="Murphy G."/>
            <person name="Bancroft I."/>
            <person name="Volckaert G."/>
            <person name="Wambutt R."/>
            <person name="Duesterhoeft A."/>
            <person name="Stiekema W."/>
            <person name="Pohl T."/>
            <person name="Entian K.-D."/>
            <person name="Terryn N."/>
            <person name="Hartley N."/>
            <person name="Bent E."/>
            <person name="Johnson S."/>
            <person name="Langham S.-A."/>
            <person name="McCullagh B."/>
            <person name="Robben J."/>
            <person name="Grymonprez B."/>
            <person name="Zimmermann W."/>
            <person name="Ramsperger U."/>
            <person name="Wedler H."/>
            <person name="Balke K."/>
            <person name="Wedler E."/>
            <person name="Peters S."/>
            <person name="van Staveren M."/>
            <person name="Dirkse W."/>
            <person name="Mooijman P."/>
            <person name="Klein Lankhorst R."/>
            <person name="Weitzenegger T."/>
            <person name="Bothe G."/>
            <person name="Rose M."/>
            <person name="Hauf J."/>
            <person name="Berneiser S."/>
            <person name="Hempel S."/>
            <person name="Feldpausch M."/>
            <person name="Lamberth S."/>
            <person name="Villarroel R."/>
            <person name="Gielen J."/>
            <person name="Ardiles W."/>
            <person name="Bents O."/>
            <person name="Lemcke K."/>
            <person name="Kolesov G."/>
            <person name="Mayer K.F.X."/>
            <person name="Rudd S."/>
            <person name="Schoof H."/>
            <person name="Schueller C."/>
            <person name="Zaccaria P."/>
            <person name="Mewes H.-W."/>
            <person name="Bevan M."/>
            <person name="Fransz P.F."/>
        </authorList>
    </citation>
    <scope>NUCLEOTIDE SEQUENCE [LARGE SCALE GENOMIC DNA]</scope>
    <source>
        <strain>cv. Columbia</strain>
    </source>
</reference>
<reference key="2">
    <citation type="journal article" date="2017" name="Plant J.">
        <title>Araport11: a complete reannotation of the Arabidopsis thaliana reference genome.</title>
        <authorList>
            <person name="Cheng C.Y."/>
            <person name="Krishnakumar V."/>
            <person name="Chan A.P."/>
            <person name="Thibaud-Nissen F."/>
            <person name="Schobel S."/>
            <person name="Town C.D."/>
        </authorList>
    </citation>
    <scope>GENOME REANNOTATION</scope>
    <source>
        <strain>cv. Columbia</strain>
    </source>
</reference>
<reference key="3">
    <citation type="submission" date="2002-03" db="EMBL/GenBank/DDBJ databases">
        <title>Full-length cDNA from Arabidopsis thaliana.</title>
        <authorList>
            <person name="Brover V.V."/>
            <person name="Troukhan M.E."/>
            <person name="Alexandrov N.A."/>
            <person name="Lu Y.-P."/>
            <person name="Flavell R.B."/>
            <person name="Feldmann K.A."/>
        </authorList>
    </citation>
    <scope>NUCLEOTIDE SEQUENCE [LARGE SCALE MRNA]</scope>
</reference>
<reference key="4">
    <citation type="journal article" date="2001" name="J. Biol. Chem.">
        <title>Phylogenetic analysis of the UDP-glycosyltransferase multigene family of Arabidopsis thaliana.</title>
        <authorList>
            <person name="Li Y."/>
            <person name="Baldauf S."/>
            <person name="Lim E.K."/>
            <person name="Bowles D.J."/>
        </authorList>
    </citation>
    <scope>GENE FAMILY</scope>
</reference>
<reference key="5">
    <citation type="journal article" date="2004" name="Biotechnol. Bioeng.">
        <title>Arabidopsis glycosyltransferases as biocatalysts in fermentation for regioselective synthesis of diverse quercetin glucosides.</title>
        <authorList>
            <person name="Lim E.K."/>
            <person name="Ashford D.A."/>
            <person name="Hou B."/>
            <person name="Jackson R.G."/>
            <person name="Bowles D.J."/>
        </authorList>
    </citation>
    <scope>FUNCTION</scope>
</reference>
<reference key="6">
    <citation type="journal article" date="2013" name="Plant Physiol. Biochem.">
        <title>The flavonoid biosynthetic pathway in Arabidopsis: Structural and genetic diversity.</title>
        <authorList>
            <person name="Saito K."/>
            <person name="Yonekura-Sakakibara K."/>
            <person name="Nakabayashi R."/>
            <person name="Higashi Y."/>
            <person name="Yamazaki M."/>
            <person name="Tohge T."/>
            <person name="Fernie A.R."/>
        </authorList>
    </citation>
    <scope>REVIEW</scope>
    <scope>NOMENCLATURE</scope>
</reference>
<sequence length="459" mass="49967">MAKPSQPTRDSHVAVLVFPFGTHAAPLLAVTCRLATAAPSTVFSFFSTARSNSSLLSSDIPTNIRVHNVDDGVPEGFVLTGNPQHAVELFLEAAPEIFRREIKAAETEVGRKFKCILTDAFLWLAAETAAAEMKASWVAYYGGGATSLTAHLYTDAIRENVGVKEVGERMEETIGFISGMEKIRVKDTQEGVVFGNLDSVFSKTLHQMGLALPRATAVFINSFEELDPTFTNDFRSEFKRYLNIGPLALLSSPSQTSTLVHDPHGCLAWIEKRSTASVAYIAFGRVATPPPVELVAIAQGLESSKVPFVWSLQEMKMTHLPEGFLDRTREQGMVVPWAPQVELLNHEAMGVFVSHGGWNSVLESVSAGVPMICRPIFGDHAINARSVEAVWEIGVTISSGVFTKDGFEESLDRVLVQDDGKKMKVNAKKLEELAQEAVSTKGSSFENFGGLLDEVVNFG</sequence>
<evidence type="ECO:0000250" key="1"/>
<evidence type="ECO:0000269" key="2">
    <source>
    </source>
</evidence>
<evidence type="ECO:0000305" key="3"/>
<gene>
    <name type="primary">UGT78D3</name>
    <name type="ordered locus">At5g17030</name>
    <name type="ORF">F2K13.180</name>
</gene>
<organism>
    <name type="scientific">Arabidopsis thaliana</name>
    <name type="common">Mouse-ear cress</name>
    <dbReference type="NCBI Taxonomy" id="3702"/>
    <lineage>
        <taxon>Eukaryota</taxon>
        <taxon>Viridiplantae</taxon>
        <taxon>Streptophyta</taxon>
        <taxon>Embryophyta</taxon>
        <taxon>Tracheophyta</taxon>
        <taxon>Spermatophyta</taxon>
        <taxon>Magnoliopsida</taxon>
        <taxon>eudicotyledons</taxon>
        <taxon>Gunneridae</taxon>
        <taxon>Pentapetalae</taxon>
        <taxon>rosids</taxon>
        <taxon>malvids</taxon>
        <taxon>Brassicales</taxon>
        <taxon>Brassicaceae</taxon>
        <taxon>Camelineae</taxon>
        <taxon>Arabidopsis</taxon>
    </lineage>
</organism>
<accession>Q9LFK0</accession>
<comment type="function">
    <text evidence="2">Possesses low quercetin 3-O-glucosyltransferase activity in vitro.</text>
</comment>
<comment type="similarity">
    <text evidence="3">Belongs to the UDP-glycosyltransferase family.</text>
</comment>
<feature type="chain" id="PRO_0000409105" description="UDP-glycosyltransferase 78D3">
    <location>
        <begin position="1"/>
        <end position="459"/>
    </location>
</feature>
<feature type="binding site" evidence="1">
    <location>
        <begin position="338"/>
        <end position="340"/>
    </location>
    <ligand>
        <name>UDP-alpha-D-glucose</name>
        <dbReference type="ChEBI" id="CHEBI:58885"/>
    </ligand>
</feature>
<feature type="binding site" evidence="1">
    <location>
        <begin position="355"/>
        <end position="363"/>
    </location>
    <ligand>
        <name>UDP-alpha-D-glucose</name>
        <dbReference type="ChEBI" id="CHEBI:58885"/>
    </ligand>
</feature>
<feature type="binding site" evidence="1">
    <location>
        <begin position="377"/>
        <end position="380"/>
    </location>
    <ligand>
        <name>UDP-alpha-D-glucose</name>
        <dbReference type="ChEBI" id="CHEBI:58885"/>
    </ligand>
</feature>
<keyword id="KW-0328">Glycosyltransferase</keyword>
<keyword id="KW-1185">Reference proteome</keyword>
<keyword id="KW-0808">Transferase</keyword>